<organism>
    <name type="scientific">Burkholderia lata (strain ATCC 17760 / DSM 23089 / LMG 22485 / NCIMB 9086 / R18194 / 383)</name>
    <dbReference type="NCBI Taxonomy" id="482957"/>
    <lineage>
        <taxon>Bacteria</taxon>
        <taxon>Pseudomonadati</taxon>
        <taxon>Pseudomonadota</taxon>
        <taxon>Betaproteobacteria</taxon>
        <taxon>Burkholderiales</taxon>
        <taxon>Burkholderiaceae</taxon>
        <taxon>Burkholderia</taxon>
        <taxon>Burkholderia cepacia complex</taxon>
    </lineage>
</organism>
<name>RUVA_BURL3</name>
<accession>Q39JJ0</accession>
<comment type="function">
    <text evidence="1">The RuvA-RuvB-RuvC complex processes Holliday junction (HJ) DNA during genetic recombination and DNA repair, while the RuvA-RuvB complex plays an important role in the rescue of blocked DNA replication forks via replication fork reversal (RFR). RuvA specifically binds to HJ cruciform DNA, conferring on it an open structure. The RuvB hexamer acts as an ATP-dependent pump, pulling dsDNA into and through the RuvAB complex. HJ branch migration allows RuvC to scan DNA until it finds its consensus sequence, where it cleaves and resolves the cruciform DNA.</text>
</comment>
<comment type="subunit">
    <text evidence="1">Homotetramer. Forms an RuvA(8)-RuvB(12)-Holliday junction (HJ) complex. HJ DNA is sandwiched between 2 RuvA tetramers; dsDNA enters through RuvA and exits via RuvB. An RuvB hexamer assembles on each DNA strand where it exits the tetramer. Each RuvB hexamer is contacted by two RuvA subunits (via domain III) on 2 adjacent RuvB subunits; this complex drives branch migration. In the full resolvosome a probable DNA-RuvA(4)-RuvB(12)-RuvC(2) complex forms which resolves the HJ.</text>
</comment>
<comment type="subcellular location">
    <subcellularLocation>
        <location evidence="1">Cytoplasm</location>
    </subcellularLocation>
</comment>
<comment type="domain">
    <text evidence="1">Has three domains with a flexible linker between the domains II and III and assumes an 'L' shape. Domain III is highly mobile and contacts RuvB.</text>
</comment>
<comment type="similarity">
    <text evidence="1">Belongs to the RuvA family.</text>
</comment>
<proteinExistence type="inferred from homology"/>
<protein>
    <recommendedName>
        <fullName evidence="1">Holliday junction branch migration complex subunit RuvA</fullName>
    </recommendedName>
</protein>
<dbReference type="EMBL" id="CP000151">
    <property type="protein sequence ID" value="ABB07376.1"/>
    <property type="molecule type" value="Genomic_DNA"/>
</dbReference>
<dbReference type="RefSeq" id="WP_011350964.1">
    <property type="nucleotide sequence ID" value="NC_007510.1"/>
</dbReference>
<dbReference type="SMR" id="Q39JJ0"/>
<dbReference type="GeneID" id="45093688"/>
<dbReference type="KEGG" id="bur:Bcep18194_A3775"/>
<dbReference type="PATRIC" id="fig|482957.22.peg.636"/>
<dbReference type="HOGENOM" id="CLU_087936_0_0_4"/>
<dbReference type="Proteomes" id="UP000002705">
    <property type="component" value="Chromosome 1"/>
</dbReference>
<dbReference type="GO" id="GO:0005737">
    <property type="term" value="C:cytoplasm"/>
    <property type="evidence" value="ECO:0007669"/>
    <property type="project" value="UniProtKB-SubCell"/>
</dbReference>
<dbReference type="GO" id="GO:0009379">
    <property type="term" value="C:Holliday junction helicase complex"/>
    <property type="evidence" value="ECO:0007669"/>
    <property type="project" value="InterPro"/>
</dbReference>
<dbReference type="GO" id="GO:0048476">
    <property type="term" value="C:Holliday junction resolvase complex"/>
    <property type="evidence" value="ECO:0007669"/>
    <property type="project" value="UniProtKB-UniRule"/>
</dbReference>
<dbReference type="GO" id="GO:0005524">
    <property type="term" value="F:ATP binding"/>
    <property type="evidence" value="ECO:0007669"/>
    <property type="project" value="InterPro"/>
</dbReference>
<dbReference type="GO" id="GO:0000400">
    <property type="term" value="F:four-way junction DNA binding"/>
    <property type="evidence" value="ECO:0007669"/>
    <property type="project" value="UniProtKB-UniRule"/>
</dbReference>
<dbReference type="GO" id="GO:0009378">
    <property type="term" value="F:four-way junction helicase activity"/>
    <property type="evidence" value="ECO:0007669"/>
    <property type="project" value="InterPro"/>
</dbReference>
<dbReference type="GO" id="GO:0006310">
    <property type="term" value="P:DNA recombination"/>
    <property type="evidence" value="ECO:0007669"/>
    <property type="project" value="UniProtKB-UniRule"/>
</dbReference>
<dbReference type="GO" id="GO:0006281">
    <property type="term" value="P:DNA repair"/>
    <property type="evidence" value="ECO:0007669"/>
    <property type="project" value="UniProtKB-UniRule"/>
</dbReference>
<dbReference type="CDD" id="cd14332">
    <property type="entry name" value="UBA_RuvA_C"/>
    <property type="match status" value="1"/>
</dbReference>
<dbReference type="Gene3D" id="1.10.150.20">
    <property type="entry name" value="5' to 3' exonuclease, C-terminal subdomain"/>
    <property type="match status" value="1"/>
</dbReference>
<dbReference type="Gene3D" id="1.10.8.10">
    <property type="entry name" value="DNA helicase RuvA subunit, C-terminal domain"/>
    <property type="match status" value="1"/>
</dbReference>
<dbReference type="Gene3D" id="2.40.50.140">
    <property type="entry name" value="Nucleic acid-binding proteins"/>
    <property type="match status" value="1"/>
</dbReference>
<dbReference type="HAMAP" id="MF_00031">
    <property type="entry name" value="DNA_HJ_migration_RuvA"/>
    <property type="match status" value="1"/>
</dbReference>
<dbReference type="InterPro" id="IPR013849">
    <property type="entry name" value="DNA_helicase_Holl-junc_RuvA_I"/>
</dbReference>
<dbReference type="InterPro" id="IPR003583">
    <property type="entry name" value="Hlx-hairpin-Hlx_DNA-bd_motif"/>
</dbReference>
<dbReference type="InterPro" id="IPR012340">
    <property type="entry name" value="NA-bd_OB-fold"/>
</dbReference>
<dbReference type="InterPro" id="IPR000085">
    <property type="entry name" value="RuvA"/>
</dbReference>
<dbReference type="InterPro" id="IPR010994">
    <property type="entry name" value="RuvA_2-like"/>
</dbReference>
<dbReference type="InterPro" id="IPR011114">
    <property type="entry name" value="RuvA_C"/>
</dbReference>
<dbReference type="InterPro" id="IPR036267">
    <property type="entry name" value="RuvA_C_sf"/>
</dbReference>
<dbReference type="NCBIfam" id="TIGR00084">
    <property type="entry name" value="ruvA"/>
    <property type="match status" value="1"/>
</dbReference>
<dbReference type="Pfam" id="PF14520">
    <property type="entry name" value="HHH_5"/>
    <property type="match status" value="1"/>
</dbReference>
<dbReference type="Pfam" id="PF07499">
    <property type="entry name" value="RuvA_C"/>
    <property type="match status" value="1"/>
</dbReference>
<dbReference type="Pfam" id="PF01330">
    <property type="entry name" value="RuvA_N"/>
    <property type="match status" value="1"/>
</dbReference>
<dbReference type="SMART" id="SM00278">
    <property type="entry name" value="HhH1"/>
    <property type="match status" value="2"/>
</dbReference>
<dbReference type="SUPFAM" id="SSF46929">
    <property type="entry name" value="DNA helicase RuvA subunit, C-terminal domain"/>
    <property type="match status" value="1"/>
</dbReference>
<dbReference type="SUPFAM" id="SSF50249">
    <property type="entry name" value="Nucleic acid-binding proteins"/>
    <property type="match status" value="1"/>
</dbReference>
<dbReference type="SUPFAM" id="SSF47781">
    <property type="entry name" value="RuvA domain 2-like"/>
    <property type="match status" value="1"/>
</dbReference>
<gene>
    <name evidence="1" type="primary">ruvA</name>
    <name type="ordered locus">Bcep18194_A3775</name>
</gene>
<evidence type="ECO:0000255" key="1">
    <source>
        <dbReference type="HAMAP-Rule" id="MF_00031"/>
    </source>
</evidence>
<reference key="1">
    <citation type="submission" date="2005-10" db="EMBL/GenBank/DDBJ databases">
        <title>Complete sequence of chromosome 1 of Burkholderia sp. 383.</title>
        <authorList>
            <consortium name="US DOE Joint Genome Institute"/>
            <person name="Copeland A."/>
            <person name="Lucas S."/>
            <person name="Lapidus A."/>
            <person name="Barry K."/>
            <person name="Detter J.C."/>
            <person name="Glavina T."/>
            <person name="Hammon N."/>
            <person name="Israni S."/>
            <person name="Pitluck S."/>
            <person name="Chain P."/>
            <person name="Malfatti S."/>
            <person name="Shin M."/>
            <person name="Vergez L."/>
            <person name="Schmutz J."/>
            <person name="Larimer F."/>
            <person name="Land M."/>
            <person name="Kyrpides N."/>
            <person name="Lykidis A."/>
            <person name="Richardson P."/>
        </authorList>
    </citation>
    <scope>NUCLEOTIDE SEQUENCE [LARGE SCALE GENOMIC DNA]</scope>
    <source>
        <strain>ATCC 17760 / DSM 23089 / LMG 22485 / NCIMB 9086 / R18194 / 383</strain>
    </source>
</reference>
<sequence>MIGRIAGILLEKNPPHLLVDCNGVGYEIDVPMSTFYNLPQNGERVVLLTQQIVREDANLLYGFLTPQERTTFRELLKITGIGARMALAVLSGMSVQELAQAVTMQDAARLTRLPGIGKKTAERLLLELKGKLGADLGELAGAASPSDHATDILNALLALGYSEKEGLAAIKNVPAGTGVSEGIKLALKALSKV</sequence>
<feature type="chain" id="PRO_0000224852" description="Holliday junction branch migration complex subunit RuvA">
    <location>
        <begin position="1"/>
        <end position="193"/>
    </location>
</feature>
<feature type="region of interest" description="Domain I" evidence="1">
    <location>
        <begin position="1"/>
        <end position="64"/>
    </location>
</feature>
<feature type="region of interest" description="Domain II" evidence="1">
    <location>
        <begin position="65"/>
        <end position="139"/>
    </location>
</feature>
<feature type="region of interest" description="Flexible linker" evidence="1">
    <location>
        <begin position="139"/>
        <end position="143"/>
    </location>
</feature>
<feature type="region of interest" description="Domain III" evidence="1">
    <location>
        <begin position="144"/>
        <end position="193"/>
    </location>
</feature>
<keyword id="KW-0963">Cytoplasm</keyword>
<keyword id="KW-0227">DNA damage</keyword>
<keyword id="KW-0233">DNA recombination</keyword>
<keyword id="KW-0234">DNA repair</keyword>
<keyword id="KW-0238">DNA-binding</keyword>